<gene>
    <name type="primary">rps4</name>
</gene>
<geneLocation type="chloroplast"/>
<protein>
    <recommendedName>
        <fullName evidence="3">Small ribosomal subunit protein uS4c</fullName>
    </recommendedName>
    <alternativeName>
        <fullName>30S ribosomal protein S4, chloroplastic</fullName>
    </alternativeName>
</protein>
<dbReference type="EMBL" id="X84133">
    <property type="protein sequence ID" value="CAA58940.1"/>
    <property type="molecule type" value="Genomic_DNA"/>
</dbReference>
<dbReference type="SMR" id="O47029"/>
<dbReference type="GO" id="GO:0009507">
    <property type="term" value="C:chloroplast"/>
    <property type="evidence" value="ECO:0007669"/>
    <property type="project" value="UniProtKB-SubCell"/>
</dbReference>
<dbReference type="GO" id="GO:0015935">
    <property type="term" value="C:small ribosomal subunit"/>
    <property type="evidence" value="ECO:0007669"/>
    <property type="project" value="InterPro"/>
</dbReference>
<dbReference type="GO" id="GO:0019843">
    <property type="term" value="F:rRNA binding"/>
    <property type="evidence" value="ECO:0007669"/>
    <property type="project" value="UniProtKB-KW"/>
</dbReference>
<dbReference type="GO" id="GO:0003735">
    <property type="term" value="F:structural constituent of ribosome"/>
    <property type="evidence" value="ECO:0007669"/>
    <property type="project" value="InterPro"/>
</dbReference>
<dbReference type="GO" id="GO:0042274">
    <property type="term" value="P:ribosomal small subunit biogenesis"/>
    <property type="evidence" value="ECO:0007669"/>
    <property type="project" value="TreeGrafter"/>
</dbReference>
<dbReference type="GO" id="GO:0006412">
    <property type="term" value="P:translation"/>
    <property type="evidence" value="ECO:0007669"/>
    <property type="project" value="InterPro"/>
</dbReference>
<dbReference type="CDD" id="cd00165">
    <property type="entry name" value="S4"/>
    <property type="match status" value="1"/>
</dbReference>
<dbReference type="FunFam" id="1.10.1050.10:FF:000002">
    <property type="entry name" value="30S ribosomal protein S4, chloroplastic"/>
    <property type="match status" value="1"/>
</dbReference>
<dbReference type="FunFam" id="3.10.290.10:FF:000081">
    <property type="entry name" value="30S ribosomal protein S4, chloroplastic"/>
    <property type="match status" value="1"/>
</dbReference>
<dbReference type="Gene3D" id="1.10.1050.10">
    <property type="entry name" value="Ribosomal Protein S4 Delta 41, Chain A, domain 1"/>
    <property type="match status" value="1"/>
</dbReference>
<dbReference type="Gene3D" id="3.10.290.10">
    <property type="entry name" value="RNA-binding S4 domain"/>
    <property type="match status" value="1"/>
</dbReference>
<dbReference type="HAMAP" id="MF_01306_B">
    <property type="entry name" value="Ribosomal_uS4_B"/>
    <property type="match status" value="1"/>
</dbReference>
<dbReference type="InterPro" id="IPR022801">
    <property type="entry name" value="Ribosomal_uS4"/>
</dbReference>
<dbReference type="InterPro" id="IPR005709">
    <property type="entry name" value="Ribosomal_uS4_bac-type"/>
</dbReference>
<dbReference type="InterPro" id="IPR018079">
    <property type="entry name" value="Ribosomal_uS4_CS"/>
</dbReference>
<dbReference type="InterPro" id="IPR001912">
    <property type="entry name" value="Ribosomal_uS4_N"/>
</dbReference>
<dbReference type="InterPro" id="IPR002942">
    <property type="entry name" value="S4_RNA-bd"/>
</dbReference>
<dbReference type="InterPro" id="IPR036986">
    <property type="entry name" value="S4_RNA-bd_sf"/>
</dbReference>
<dbReference type="NCBIfam" id="NF003717">
    <property type="entry name" value="PRK05327.1"/>
    <property type="match status" value="1"/>
</dbReference>
<dbReference type="NCBIfam" id="TIGR01017">
    <property type="entry name" value="rpsD_bact"/>
    <property type="match status" value="1"/>
</dbReference>
<dbReference type="PANTHER" id="PTHR11831">
    <property type="entry name" value="30S 40S RIBOSOMAL PROTEIN"/>
    <property type="match status" value="1"/>
</dbReference>
<dbReference type="PANTHER" id="PTHR11831:SF4">
    <property type="entry name" value="SMALL RIBOSOMAL SUBUNIT PROTEIN US4M"/>
    <property type="match status" value="1"/>
</dbReference>
<dbReference type="Pfam" id="PF00163">
    <property type="entry name" value="Ribosomal_S4"/>
    <property type="match status" value="1"/>
</dbReference>
<dbReference type="Pfam" id="PF01479">
    <property type="entry name" value="S4"/>
    <property type="match status" value="1"/>
</dbReference>
<dbReference type="SMART" id="SM01390">
    <property type="entry name" value="Ribosomal_S4"/>
    <property type="match status" value="1"/>
</dbReference>
<dbReference type="SMART" id="SM00363">
    <property type="entry name" value="S4"/>
    <property type="match status" value="1"/>
</dbReference>
<dbReference type="SUPFAM" id="SSF55174">
    <property type="entry name" value="Alpha-L RNA-binding motif"/>
    <property type="match status" value="1"/>
</dbReference>
<dbReference type="PROSITE" id="PS00632">
    <property type="entry name" value="RIBOSOMAL_S4"/>
    <property type="match status" value="1"/>
</dbReference>
<dbReference type="PROSITE" id="PS50889">
    <property type="entry name" value="S4"/>
    <property type="match status" value="1"/>
</dbReference>
<evidence type="ECO:0000250" key="1"/>
<evidence type="ECO:0000256" key="2">
    <source>
        <dbReference type="SAM" id="MobiDB-lite"/>
    </source>
</evidence>
<evidence type="ECO:0000305" key="3"/>
<accession>O47029</accession>
<sequence length="196" mass="22720">MSRYRGPRFKKIRRLGALPGLTSKRPRSGSDLKNPLRSGKRSQYRIRLEEKQKLRFHYGLTERQLLRYVHIARKAKGSTGQVLLQLLEMRLDNILFRLGMASTIPGARQLVNHRHILVNGRIVDIPSYRCKPRDIITTKDKQRSKALIQNSIASAPREELPNHLTIDSFQYKGLVNQIIDSKWIGLKINELLVVEY</sequence>
<organism>
    <name type="scientific">Narcissus odorus</name>
    <name type="common">Campernelle jonquil</name>
    <name type="synonym">Narcissus jonquilla x Narcissus pseudonarcissus</name>
    <dbReference type="NCBI Taxonomy" id="59032"/>
    <lineage>
        <taxon>Eukaryota</taxon>
        <taxon>Viridiplantae</taxon>
        <taxon>Streptophyta</taxon>
        <taxon>Embryophyta</taxon>
        <taxon>Tracheophyta</taxon>
        <taxon>Spermatophyta</taxon>
        <taxon>Magnoliopsida</taxon>
        <taxon>Liliopsida</taxon>
        <taxon>Asparagales</taxon>
        <taxon>Amaryllidaceae</taxon>
        <taxon>Amaryllidoideae</taxon>
        <taxon>Narcissus</taxon>
    </lineage>
</organism>
<keyword id="KW-0150">Chloroplast</keyword>
<keyword id="KW-0934">Plastid</keyword>
<keyword id="KW-0687">Ribonucleoprotein</keyword>
<keyword id="KW-0689">Ribosomal protein</keyword>
<keyword id="KW-0694">RNA-binding</keyword>
<keyword id="KW-0699">rRNA-binding</keyword>
<feature type="chain" id="PRO_0000132632" description="Small ribosomal subunit protein uS4c">
    <location>
        <begin position="1"/>
        <end position="196" status="greater than"/>
    </location>
</feature>
<feature type="domain" description="S4 RNA-binding">
    <location>
        <begin position="89"/>
        <end position="150"/>
    </location>
</feature>
<feature type="region of interest" description="Disordered" evidence="2">
    <location>
        <begin position="15"/>
        <end position="41"/>
    </location>
</feature>
<feature type="non-terminal residue">
    <location>
        <position position="196"/>
    </location>
</feature>
<name>RR4_NAROD</name>
<proteinExistence type="inferred from homology"/>
<reference key="1">
    <citation type="journal article" date="1997" name="Plant Syst. Evol.">
        <title>Phylogenetic analysis of Iridaceae with parsimony and distance methods using the plastid gene rps4.</title>
        <authorList>
            <person name="Souza-Chies T.T."/>
            <person name="Bittar G."/>
            <person name="Nadot S."/>
            <person name="Carter L."/>
            <person name="Besin E."/>
            <person name="Lejeune B.P."/>
        </authorList>
    </citation>
    <scope>NUCLEOTIDE SEQUENCE [GENOMIC DNA]</scope>
</reference>
<comment type="function">
    <text evidence="1">One of the primary rRNA binding proteins, it binds directly to 16S rRNA where it nucleates assembly of the body of the 30S subunit.</text>
</comment>
<comment type="function">
    <text evidence="1">With S5 and S12 plays an important role in translational accuracy.</text>
</comment>
<comment type="subunit">
    <text evidence="1">Part of the 30S ribosomal subunit. Contacts protein S5. The interaction surface between S4 and S5 is involved in control of translational fidelity (By similarity).</text>
</comment>
<comment type="subcellular location">
    <subcellularLocation>
        <location>Plastid</location>
        <location>Chloroplast</location>
    </subcellularLocation>
</comment>
<comment type="similarity">
    <text evidence="3">Belongs to the universal ribosomal protein uS4 family.</text>
</comment>